<feature type="chain" id="PRO_0000356829" description="Putative zinc carboxypeptidase">
    <location>
        <begin position="1"/>
        <end position="1620"/>
    </location>
</feature>
<feature type="topological domain" description="Extracellular" evidence="2">
    <location>
        <begin position="1"/>
        <end position="1367"/>
    </location>
</feature>
<feature type="transmembrane region" description="Helical" evidence="2">
    <location>
        <begin position="1368"/>
        <end position="1388"/>
    </location>
</feature>
<feature type="topological domain" description="Cytoplasmic" evidence="2">
    <location>
        <begin position="1389"/>
        <end position="1620"/>
    </location>
</feature>
<feature type="domain" description="Peptidase M14" evidence="3">
    <location>
        <begin position="1004"/>
        <end position="1261"/>
    </location>
</feature>
<feature type="region of interest" description="Disordered" evidence="4">
    <location>
        <begin position="32"/>
        <end position="74"/>
    </location>
</feature>
<feature type="region of interest" description="Disordered" evidence="4">
    <location>
        <begin position="309"/>
        <end position="328"/>
    </location>
</feature>
<feature type="region of interest" description="Possible malaria epitope">
    <location>
        <begin position="497"/>
        <end position="559"/>
    </location>
</feature>
<feature type="region of interest" description="Disordered" evidence="4">
    <location>
        <begin position="1279"/>
        <end position="1329"/>
    </location>
</feature>
<feature type="region of interest" description="Disordered" evidence="4">
    <location>
        <begin position="1560"/>
        <end position="1620"/>
    </location>
</feature>
<feature type="compositionally biased region" description="Basic and acidic residues" evidence="4">
    <location>
        <begin position="33"/>
        <end position="43"/>
    </location>
</feature>
<feature type="compositionally biased region" description="Acidic residues" evidence="4">
    <location>
        <begin position="44"/>
        <end position="55"/>
    </location>
</feature>
<feature type="compositionally biased region" description="Basic and acidic residues" evidence="4">
    <location>
        <begin position="1581"/>
        <end position="1597"/>
    </location>
</feature>
<feature type="compositionally biased region" description="Basic residues" evidence="4">
    <location>
        <begin position="1598"/>
        <end position="1620"/>
    </location>
</feature>
<feature type="active site" description="Proton donor/acceptor" evidence="3">
    <location>
        <position position="1229"/>
    </location>
</feature>
<feature type="binding site" evidence="3">
    <location>
        <position position="1059"/>
    </location>
    <ligand>
        <name>Zn(2+)</name>
        <dbReference type="ChEBI" id="CHEBI:29105"/>
        <note>catalytic</note>
    </ligand>
</feature>
<feature type="binding site" evidence="3">
    <location>
        <position position="1062"/>
    </location>
    <ligand>
        <name>Zn(2+)</name>
        <dbReference type="ChEBI" id="CHEBI:29105"/>
        <note>catalytic</note>
    </ligand>
</feature>
<feature type="binding site" evidence="3">
    <location>
        <position position="1155"/>
    </location>
    <ligand>
        <name>Zn(2+)</name>
        <dbReference type="ChEBI" id="CHEBI:29105"/>
        <note>catalytic</note>
    </ligand>
</feature>
<feature type="glycosylation site" description="N-linked (GlcNAc...) asparagine" evidence="2">
    <location>
        <position position="19"/>
    </location>
</feature>
<feature type="glycosylation site" description="N-linked (GlcNAc...) asparagine" evidence="2">
    <location>
        <position position="56"/>
    </location>
</feature>
<feature type="glycosylation site" description="N-linked (GlcNAc...) asparagine" evidence="2">
    <location>
        <position position="102"/>
    </location>
</feature>
<feature type="glycosylation site" description="N-linked (GlcNAc...) asparagine" evidence="2">
    <location>
        <position position="354"/>
    </location>
</feature>
<feature type="glycosylation site" description="N-linked (GlcNAc...) asparagine" evidence="2">
    <location>
        <position position="487"/>
    </location>
</feature>
<feature type="glycosylation site" description="N-linked (GlcNAc...) asparagine" evidence="2">
    <location>
        <position position="508"/>
    </location>
</feature>
<feature type="glycosylation site" description="N-linked (GlcNAc...) asparagine" evidence="2">
    <location>
        <position position="529"/>
    </location>
</feature>
<feature type="glycosylation site" description="N-linked (GlcNAc...) asparagine" evidence="2">
    <location>
        <position position="550"/>
    </location>
</feature>
<feature type="glycosylation site" description="N-linked (GlcNAc...) asparagine" evidence="2">
    <location>
        <position position="571"/>
    </location>
</feature>
<feature type="glycosylation site" description="N-linked (GlcNAc...) asparagine" evidence="2">
    <location>
        <position position="589"/>
    </location>
</feature>
<feature type="glycosylation site" description="N-linked (GlcNAc...) asparagine" evidence="2">
    <location>
        <position position="687"/>
    </location>
</feature>
<feature type="glycosylation site" description="N-linked (GlcNAc...) asparagine" evidence="2">
    <location>
        <position position="802"/>
    </location>
</feature>
<feature type="glycosylation site" description="N-linked (GlcNAc...) asparagine" evidence="2">
    <location>
        <position position="1010"/>
    </location>
</feature>
<feature type="glycosylation site" description="N-linked (GlcNAc...) asparagine" evidence="2">
    <location>
        <position position="1064"/>
    </location>
</feature>
<feature type="glycosylation site" description="N-linked (GlcNAc...) asparagine" evidence="2">
    <location>
        <position position="1141"/>
    </location>
</feature>
<keyword id="KW-0121">Carboxypeptidase</keyword>
<keyword id="KW-0325">Glycoprotein</keyword>
<keyword id="KW-0378">Hydrolase</keyword>
<keyword id="KW-0472">Membrane</keyword>
<keyword id="KW-0477">Merozoite</keyword>
<keyword id="KW-0479">Metal-binding</keyword>
<keyword id="KW-0482">Metalloprotease</keyword>
<keyword id="KW-0645">Protease</keyword>
<keyword id="KW-1185">Reference proteome</keyword>
<keyword id="KW-0812">Transmembrane</keyword>
<keyword id="KW-1133">Transmembrane helix</keyword>
<keyword id="KW-0862">Zinc</keyword>
<organism>
    <name type="scientific">Plasmodium falciparum (isolate 3D7)</name>
    <dbReference type="NCBI Taxonomy" id="36329"/>
    <lineage>
        <taxon>Eukaryota</taxon>
        <taxon>Sar</taxon>
        <taxon>Alveolata</taxon>
        <taxon>Apicomplexa</taxon>
        <taxon>Aconoidasida</taxon>
        <taxon>Haemosporida</taxon>
        <taxon>Plasmodiidae</taxon>
        <taxon>Plasmodium</taxon>
        <taxon>Plasmodium (Laverania)</taxon>
    </lineage>
</organism>
<proteinExistence type="evidence at protein level"/>
<accession>Q8I2A6</accession>
<dbReference type="EC" id="3.4.17.-"/>
<dbReference type="EMBL" id="AL844501">
    <property type="protein sequence ID" value="CAD48994.2"/>
    <property type="molecule type" value="Genomic_DNA"/>
</dbReference>
<dbReference type="RefSeq" id="XP_001350966.2">
    <property type="nucleotide sequence ID" value="XM_001350930.2"/>
</dbReference>
<dbReference type="FunCoup" id="Q8I2A6">
    <property type="interactions" value="747"/>
</dbReference>
<dbReference type="STRING" id="36329.Q8I2A6"/>
<dbReference type="MEROPS" id="M14.A35"/>
<dbReference type="PaxDb" id="5833-PFA0170c"/>
<dbReference type="EnsemblProtists" id="CAD48994">
    <property type="protein sequence ID" value="CAD48994"/>
    <property type="gene ID" value="PF3D7_0103400"/>
</dbReference>
<dbReference type="GeneID" id="813171"/>
<dbReference type="KEGG" id="pfa:PF3D7_0103400"/>
<dbReference type="HOGENOM" id="CLU_243587_0_0_1"/>
<dbReference type="InParanoid" id="Q8I2A6"/>
<dbReference type="OrthoDB" id="10253041at2759"/>
<dbReference type="Proteomes" id="UP000001450">
    <property type="component" value="Chromosome 1"/>
</dbReference>
<dbReference type="GO" id="GO:0005737">
    <property type="term" value="C:cytoplasm"/>
    <property type="evidence" value="ECO:0000318"/>
    <property type="project" value="GO_Central"/>
</dbReference>
<dbReference type="GO" id="GO:0016020">
    <property type="term" value="C:membrane"/>
    <property type="evidence" value="ECO:0007669"/>
    <property type="project" value="UniProtKB-SubCell"/>
</dbReference>
<dbReference type="GO" id="GO:0015630">
    <property type="term" value="C:microtubule cytoskeleton"/>
    <property type="evidence" value="ECO:0000318"/>
    <property type="project" value="GO_Central"/>
</dbReference>
<dbReference type="GO" id="GO:0046872">
    <property type="term" value="F:metal ion binding"/>
    <property type="evidence" value="ECO:0007669"/>
    <property type="project" value="UniProtKB-KW"/>
</dbReference>
<dbReference type="GO" id="GO:0004181">
    <property type="term" value="F:metallocarboxypeptidase activity"/>
    <property type="evidence" value="ECO:0000318"/>
    <property type="project" value="GO_Central"/>
</dbReference>
<dbReference type="GO" id="GO:0015631">
    <property type="term" value="F:tubulin binding"/>
    <property type="evidence" value="ECO:0000318"/>
    <property type="project" value="GO_Central"/>
</dbReference>
<dbReference type="GO" id="GO:0006508">
    <property type="term" value="P:proteolysis"/>
    <property type="evidence" value="ECO:0007669"/>
    <property type="project" value="UniProtKB-KW"/>
</dbReference>
<dbReference type="Gene3D" id="2.60.40.3120">
    <property type="match status" value="1"/>
</dbReference>
<dbReference type="Gene3D" id="3.40.630.10">
    <property type="entry name" value="Zn peptidases"/>
    <property type="match status" value="1"/>
</dbReference>
<dbReference type="InterPro" id="IPR050821">
    <property type="entry name" value="Cytosolic_carboxypeptidase"/>
</dbReference>
<dbReference type="InterPro" id="IPR000834">
    <property type="entry name" value="Peptidase_M14"/>
</dbReference>
<dbReference type="PANTHER" id="PTHR12756">
    <property type="entry name" value="CYTOSOLIC CARBOXYPEPTIDASE"/>
    <property type="match status" value="1"/>
</dbReference>
<dbReference type="PANTHER" id="PTHR12756:SF11">
    <property type="entry name" value="CYTOSOLIC CARBOXYPEPTIDASE 1"/>
    <property type="match status" value="1"/>
</dbReference>
<dbReference type="SUPFAM" id="SSF58104">
    <property type="entry name" value="Methyl-accepting chemotaxis protein (MCP) signaling domain"/>
    <property type="match status" value="1"/>
</dbReference>
<dbReference type="SUPFAM" id="SSF53187">
    <property type="entry name" value="Zn-dependent exopeptidases"/>
    <property type="match status" value="1"/>
</dbReference>
<dbReference type="PROSITE" id="PS52035">
    <property type="entry name" value="PEPTIDASE_M14"/>
    <property type="match status" value="1"/>
</dbReference>
<reference key="1">
    <citation type="journal article" date="2002" name="Nature">
        <title>Genome sequence of the human malaria parasite Plasmodium falciparum.</title>
        <authorList>
            <person name="Gardner M.J."/>
            <person name="Hall N."/>
            <person name="Fung E."/>
            <person name="White O."/>
            <person name="Berriman M."/>
            <person name="Hyman R.W."/>
            <person name="Carlton J.M."/>
            <person name="Pain A."/>
            <person name="Nelson K.E."/>
            <person name="Bowman S."/>
            <person name="Paulsen I.T."/>
            <person name="James K.D."/>
            <person name="Eisen J.A."/>
            <person name="Rutherford K.M."/>
            <person name="Salzberg S.L."/>
            <person name="Craig A."/>
            <person name="Kyes S."/>
            <person name="Chan M.-S."/>
            <person name="Nene V."/>
            <person name="Shallom S.J."/>
            <person name="Suh B."/>
            <person name="Peterson J."/>
            <person name="Angiuoli S."/>
            <person name="Pertea M."/>
            <person name="Allen J."/>
            <person name="Selengut J."/>
            <person name="Haft D."/>
            <person name="Mather M.W."/>
            <person name="Vaidya A.B."/>
            <person name="Martin D.M.A."/>
            <person name="Fairlamb A.H."/>
            <person name="Fraunholz M.J."/>
            <person name="Roos D.S."/>
            <person name="Ralph S.A."/>
            <person name="McFadden G.I."/>
            <person name="Cummings L.M."/>
            <person name="Subramanian G.M."/>
            <person name="Mungall C."/>
            <person name="Venter J.C."/>
            <person name="Carucci D.J."/>
            <person name="Hoffman S.L."/>
            <person name="Newbold C."/>
            <person name="Davis R.W."/>
            <person name="Fraser C.M."/>
            <person name="Barrell B.G."/>
        </authorList>
    </citation>
    <scope>NUCLEOTIDE SEQUENCE [LARGE SCALE GENOMIC DNA]</scope>
    <source>
        <strain>3D7</strain>
    </source>
</reference>
<reference evidence="7" key="2">
    <citation type="journal article" date="2002" name="Nature">
        <title>Sequence of Plasmodium falciparum chromosomes 1, 3-9 and 13.</title>
        <authorList>
            <person name="Hall N."/>
            <person name="Pain A."/>
            <person name="Berriman M."/>
            <person name="Churcher C.M."/>
            <person name="Harris B."/>
            <person name="Harris D."/>
            <person name="Mungall K.L."/>
            <person name="Bowman S."/>
            <person name="Atkin R."/>
            <person name="Baker S."/>
            <person name="Barron A."/>
            <person name="Brooks K."/>
            <person name="Buckee C.O."/>
            <person name="Burrows C."/>
            <person name="Cherevach I."/>
            <person name="Chillingworth C."/>
            <person name="Chillingworth T."/>
            <person name="Christodoulou Z."/>
            <person name="Clark L."/>
            <person name="Clark R."/>
            <person name="Corton C."/>
            <person name="Cronin A."/>
            <person name="Davies R.M."/>
            <person name="Davis P."/>
            <person name="Dear P."/>
            <person name="Dearden F."/>
            <person name="Doggett J."/>
            <person name="Feltwell T."/>
            <person name="Goble A."/>
            <person name="Goodhead I."/>
            <person name="Gwilliam R."/>
            <person name="Hamlin N."/>
            <person name="Hance Z."/>
            <person name="Harper D."/>
            <person name="Hauser H."/>
            <person name="Hornsby T."/>
            <person name="Holroyd S."/>
            <person name="Horrocks P."/>
            <person name="Humphray S."/>
            <person name="Jagels K."/>
            <person name="James K.D."/>
            <person name="Johnson D."/>
            <person name="Kerhornou A."/>
            <person name="Knights A."/>
            <person name="Konfortov B."/>
            <person name="Kyes S."/>
            <person name="Larke N."/>
            <person name="Lawson D."/>
            <person name="Lennard N."/>
            <person name="Line A."/>
            <person name="Maddison M."/>
            <person name="Mclean J."/>
            <person name="Mooney P."/>
            <person name="Moule S."/>
            <person name="Murphy L."/>
            <person name="Oliver K."/>
            <person name="Ormond D."/>
            <person name="Price C."/>
            <person name="Quail M.A."/>
            <person name="Rabbinowitsch E."/>
            <person name="Rajandream M.A."/>
            <person name="Rutter S."/>
            <person name="Rutherford K.M."/>
            <person name="Sanders M."/>
            <person name="Simmonds M."/>
            <person name="Seeger K."/>
            <person name="Sharp S."/>
            <person name="Smith R."/>
            <person name="Squares R."/>
            <person name="Squares S."/>
            <person name="Stevens K."/>
            <person name="Taylor K."/>
            <person name="Tivey A."/>
            <person name="Unwin L."/>
            <person name="Whitehead S."/>
            <person name="Woodward J.R."/>
            <person name="Sulston J.E."/>
            <person name="Craig A."/>
            <person name="Newbold C."/>
            <person name="Barrell B.G."/>
        </authorList>
    </citation>
    <scope>NUCLEOTIDE SEQUENCE [LARGE SCALE GENOMIC DNA]</scope>
    <source>
        <strain>3D7</strain>
    </source>
</reference>
<reference evidence="6" key="3">
    <citation type="journal article" date="2007" name="PLoS ONE">
        <title>Rapid identification of malaria vaccine candidates based on alpha-helical coiled coil protein motif.</title>
        <authorList>
            <person name="Villard V."/>
            <person name="Agak G.W."/>
            <person name="Frank G."/>
            <person name="Jafarshad A."/>
            <person name="Servis C."/>
            <person name="Nebie I."/>
            <person name="Sirima S.B."/>
            <person name="Felger I."/>
            <person name="Arevalo-Herrera M."/>
            <person name="Herrera S."/>
            <person name="Heitz F."/>
            <person name="Baecker V."/>
            <person name="Druilhe P."/>
            <person name="Kajava A.V."/>
            <person name="Corradin G."/>
        </authorList>
    </citation>
    <scope>SYNTHESIS OF 497-559</scope>
    <scope>DEVELOPMENTAL STAGE</scope>
    <scope>POSSIBLE CANDIDATE MALARIA EPITOPE</scope>
</reference>
<gene>
    <name type="ORF">PF3D7_0103400</name>
    <name type="ORF">PFA0170c</name>
</gene>
<comment type="cofactor">
    <cofactor evidence="1">
        <name>Zn(2+)</name>
        <dbReference type="ChEBI" id="CHEBI:29105"/>
    </cofactor>
    <text evidence="1">Binds 1 zinc ion per subunit.</text>
</comment>
<comment type="subcellular location">
    <subcellularLocation>
        <location evidence="2">Membrane</location>
        <topology evidence="6">Single-pass type I membrane protein</topology>
    </subcellularLocation>
</comment>
<comment type="developmental stage">
    <text evidence="5">Expressed during the asexual cell-cycle on the cell surface of the host erythrocytes.</text>
</comment>
<comment type="biotechnology">
    <text evidence="5">Possible candidate for an effective malaria vaccine as determined by epitope response in sera.</text>
</comment>
<comment type="similarity">
    <text evidence="2">Belongs to the peptidase M14 family.</text>
</comment>
<protein>
    <recommendedName>
        <fullName>Putative zinc carboxypeptidase</fullName>
        <ecNumber>3.4.17.-</ecNumber>
    </recommendedName>
</protein>
<evidence type="ECO:0000250" key="1">
    <source>
        <dbReference type="UniProtKB" id="P00730"/>
    </source>
</evidence>
<evidence type="ECO:0000255" key="2"/>
<evidence type="ECO:0000255" key="3">
    <source>
        <dbReference type="PROSITE-ProRule" id="PRU01379"/>
    </source>
</evidence>
<evidence type="ECO:0000256" key="4">
    <source>
        <dbReference type="SAM" id="MobiDB-lite"/>
    </source>
</evidence>
<evidence type="ECO:0000269" key="5">
    <source>
    </source>
</evidence>
<evidence type="ECO:0000305" key="6"/>
<evidence type="ECO:0000312" key="7">
    <source>
        <dbReference type="EMBL" id="CAD48994.2"/>
    </source>
</evidence>
<sequence length="1620" mass="191963">MLFKNEDSGNGVYCFTYNNFSDVTISDILNIRNDNKNNDNEDNKQDDEEKNDEDDNKSNLLLEENEENKRQGDKPFEDLSLFSFKNNEQCYDNIKMQQAILNSSYEKNVKNIVKIVYHEDCKLLYENTDIHVELPSIVYGRNRNKNNDVVNKCNQYNDDDYTNKCNQYNDDDYTNKCNQYNDDDYTNKCNQYNDNDYTNKCNQYNDNDYTNKCNQYNDVRKITNLKYFINHNWKNINLINEKLFLKNLKELEEILNYNFLHICKNKCKQYNKKRKNERHFSYHDNFLSHYIIYKKNKFIKHNKNEHINGNHYDAHESTNTYDEEKTREKHNNKNNNMKYCLNKYPYDNVNAPLNLSCPWYEKKIENIYCLNIPGYKYKYKYICPSMSKMNDEKIKELYIPKGHILFNSKFESGNLKYVIKEENDKEVYSLFLNPDIRMNEKKNQWFYFSASYVPNEYYTNELYKMKMCNKDINHIGDNMNVVYNYMNGTGNNINNIVNNLDSTVNYMNSTGNNINNIVNNLDSTVNYMNSTGNNINNIVNNLDSTVNYMNSTGNNINNIVNNLDSTVNYMNSTGNYLNRKNNNHLSYTNWSGQRCMNQYLNDINNDEIDTNLDGNRKYSLDACDKFTVRNVRKLEKPFTVRFKIENMAKPFFLYKYGHSPLSFSECKYKIENIQWERNSYDIKYIKNSSCKHYNIKKNSMEYYNYNTYTLEFSYDFTYAYDTVYFASSYPYTYSYLSEYLCLIRNLLKDHPTINYIEERLCKTSCGFDCPVLCITNYDRMEEYNKEELKESVEKKQNIVEANNTCDEKLVDGMDISSNAIRKEIKKKGYILTSKKLDKNRVVNNLFVDMKNGCTRGCASGCTNGCANGYTNGYTNRYTKGCTKGCTNEYSNDNMCKECLDIKNICYQEEKEKCDIIKYNDDKDYSHNCCYEECYNMKREKKKFVCCLSDKCNSFLNEQIKRRRSIMGWNILRNRIKCCKNKMYTSNDFMKTFDSLLKKVYVCKGENKKNNGTKIIKRFEEKYDNNLLFKRKDEKRSLSASPKKKKKKKKKIIVLTARVHPGETNSSYAIHGFIAFIISNNIYAHILREKFIFIIIPMLNIDGVILGNNRYCYNGFDLNRQWSNPIGYIHPTIYSAKLLMKNISENNKIIFFCDFHSHSRKYNCFIFGNEGSYNYVKNKKMCEVFPEIYSHTLPWFALVDTVYKADNENKGSARLISGKEFSLDCSYTFEISLFGIQIRKDFNIMYDEKKDIFYVQNYFEGYQNGDDNIKGGDNIKGGDNIKGDDNINGDDNIKGGDNIKGDDNIKRDDNFQRDDNFQRDDNFQRGDNFHRGDNFHRDDIYDKMNKHYINNNYYYDKNSYDFLYFDENLLFMTGVSFGICLFKFINFLSYHKSSICRRTCEEKEKEHISTETCGILCAKNNKDDEEKCNESKKQNHDAFKTGNSLEFDKGEEHLLSDTHRMVNTFLCNSMNKSKNKNKNKKGYNYILNKYGFIKLKSSKKHIEEVKRIRKLKKKKYMVKEVYELGRKIKQNKYYHNYPFGLYKVNINDVIRILNKINMDDPNGKYKGPGFNNSVDMKKKIKNKNESKTEKKSKTENKSKSKSKNKSKSKNKSKRKKVIVIL</sequence>
<name>CBPZ1_PLAF7</name>